<comment type="function">
    <text evidence="3 7">Catalyzes the trans-addition of the 3 molecules of IPP onto DMAPP to form geranylgeranyl pyrophosphate. Required for the membrane attachment of YPT1 and SEC4. May be involved in vesicle trafficking and protein sorting.</text>
</comment>
<comment type="catalytic activity">
    <reaction>
        <text>isopentenyl diphosphate + dimethylallyl diphosphate = (2E)-geranyl diphosphate + diphosphate</text>
        <dbReference type="Rhea" id="RHEA:22408"/>
        <dbReference type="ChEBI" id="CHEBI:33019"/>
        <dbReference type="ChEBI" id="CHEBI:57623"/>
        <dbReference type="ChEBI" id="CHEBI:58057"/>
        <dbReference type="ChEBI" id="CHEBI:128769"/>
        <dbReference type="EC" id="2.5.1.1"/>
    </reaction>
</comment>
<comment type="catalytic activity">
    <reaction>
        <text>isopentenyl diphosphate + (2E)-geranyl diphosphate = (2E,6E)-farnesyl diphosphate + diphosphate</text>
        <dbReference type="Rhea" id="RHEA:19361"/>
        <dbReference type="ChEBI" id="CHEBI:33019"/>
        <dbReference type="ChEBI" id="CHEBI:58057"/>
        <dbReference type="ChEBI" id="CHEBI:128769"/>
        <dbReference type="ChEBI" id="CHEBI:175763"/>
        <dbReference type="EC" id="2.5.1.10"/>
    </reaction>
</comment>
<comment type="catalytic activity">
    <reaction evidence="7">
        <text>isopentenyl diphosphate + (2E,6E)-farnesyl diphosphate = (2E,6E,10E)-geranylgeranyl diphosphate + diphosphate</text>
        <dbReference type="Rhea" id="RHEA:17653"/>
        <dbReference type="ChEBI" id="CHEBI:33019"/>
        <dbReference type="ChEBI" id="CHEBI:58756"/>
        <dbReference type="ChEBI" id="CHEBI:128769"/>
        <dbReference type="ChEBI" id="CHEBI:175763"/>
        <dbReference type="EC" id="2.5.1.29"/>
    </reaction>
</comment>
<comment type="cofactor">
    <cofactor evidence="5">
        <name>Mg(2+)</name>
        <dbReference type="ChEBI" id="CHEBI:18420"/>
    </cofactor>
    <text evidence="5">Binds 2 Mg(2+) ions per subunit.</text>
</comment>
<comment type="biophysicochemical properties">
    <kinetics>
        <KM>3.2 uM for farnesyl diphosphate</KM>
        <KM>0.8 uM for isopentenyl diphosphate</KM>
    </kinetics>
</comment>
<comment type="pathway">
    <text>Isoprenoid biosynthesis; farnesyl diphosphate biosynthesis; farnesyl diphosphate from geranyl diphosphate and isopentenyl diphosphate: step 1/1.</text>
</comment>
<comment type="pathway">
    <text>Isoprenoid biosynthesis; geranyl diphosphate biosynthesis; geranyl diphosphate from dimethylallyl diphosphate and isopentenyl diphosphate: step 1/1.</text>
</comment>
<comment type="pathway">
    <text>Isoprenoid biosynthesis; geranylgeranyl diphosphate biosynthesis; geranylgeranyl diphosphate from farnesyl diphosphate and isopentenyl diphosphate: step 1/1.</text>
</comment>
<comment type="subcellular location">
    <subcellularLocation>
        <location evidence="1">Cytoplasm</location>
    </subcellularLocation>
</comment>
<comment type="miscellaneous">
    <text evidence="2">Present with 2840 molecules/cell in log phase SD medium.</text>
</comment>
<comment type="similarity">
    <text evidence="9">Belongs to the FPP/GGPP synthase family.</text>
</comment>
<feature type="chain" id="PRO_0000228139" description="Geranylgeranyl pyrophosphate synthase BTS1">
    <location>
        <begin position="1"/>
        <end position="335"/>
    </location>
</feature>
<feature type="binding site" evidence="5">
    <location>
        <position position="36"/>
    </location>
    <ligand>
        <name>isopentenyl diphosphate</name>
        <dbReference type="ChEBI" id="CHEBI:128769"/>
    </ligand>
</feature>
<feature type="binding site" evidence="5">
    <location>
        <position position="39"/>
    </location>
    <ligand>
        <name>isopentenyl diphosphate</name>
        <dbReference type="ChEBI" id="CHEBI:128769"/>
    </ligand>
</feature>
<feature type="binding site" evidence="5">
    <location>
        <position position="68"/>
    </location>
    <ligand>
        <name>isopentenyl diphosphate</name>
        <dbReference type="ChEBI" id="CHEBI:128769"/>
    </ligand>
</feature>
<feature type="binding site" evidence="4 5">
    <location>
        <position position="75"/>
    </location>
    <ligand>
        <name>Mg(2+)</name>
        <dbReference type="ChEBI" id="CHEBI:18420"/>
        <label>1</label>
    </ligand>
</feature>
<feature type="binding site" evidence="4 5">
    <location>
        <position position="75"/>
    </location>
    <ligand>
        <name>Mg(2+)</name>
        <dbReference type="ChEBI" id="CHEBI:18420"/>
        <label>2</label>
    </ligand>
</feature>
<feature type="binding site" evidence="4 5">
    <location>
        <position position="79"/>
    </location>
    <ligand>
        <name>Mg(2+)</name>
        <dbReference type="ChEBI" id="CHEBI:18420"/>
        <label>1</label>
    </ligand>
</feature>
<feature type="binding site" evidence="4 5">
    <location>
        <position position="79"/>
    </location>
    <ligand>
        <name>Mg(2+)</name>
        <dbReference type="ChEBI" id="CHEBI:18420"/>
        <label>2</label>
    </ligand>
</feature>
<feature type="binding site" evidence="5">
    <location>
        <position position="84"/>
    </location>
    <ligand>
        <name>dimethylallyl diphosphate</name>
        <dbReference type="ChEBI" id="CHEBI:57623"/>
    </ligand>
</feature>
<feature type="binding site" evidence="5">
    <location>
        <position position="85"/>
    </location>
    <ligand>
        <name>isopentenyl diphosphate</name>
        <dbReference type="ChEBI" id="CHEBI:128769"/>
    </ligand>
</feature>
<feature type="binding site" evidence="5">
    <location>
        <position position="169"/>
    </location>
    <ligand>
        <name>dimethylallyl diphosphate</name>
        <dbReference type="ChEBI" id="CHEBI:57623"/>
    </ligand>
</feature>
<feature type="binding site" evidence="5">
    <location>
        <position position="170"/>
    </location>
    <ligand>
        <name>dimethylallyl diphosphate</name>
        <dbReference type="ChEBI" id="CHEBI:57623"/>
    </ligand>
</feature>
<feature type="binding site" evidence="5">
    <location>
        <position position="206"/>
    </location>
    <ligand>
        <name>dimethylallyl diphosphate</name>
        <dbReference type="ChEBI" id="CHEBI:57623"/>
    </ligand>
</feature>
<feature type="binding site" evidence="5">
    <location>
        <position position="213"/>
    </location>
    <ligand>
        <name>dimethylallyl diphosphate</name>
        <dbReference type="ChEBI" id="CHEBI:57623"/>
    </ligand>
</feature>
<feature type="binding site" evidence="10">
    <location>
        <position position="223"/>
    </location>
    <ligand>
        <name>dimethylallyl diphosphate</name>
        <dbReference type="ChEBI" id="CHEBI:57623"/>
    </ligand>
</feature>
<feature type="binding site" evidence="5">
    <location>
        <position position="233"/>
    </location>
    <ligand>
        <name>dimethylallyl diphosphate</name>
        <dbReference type="ChEBI" id="CHEBI:57623"/>
    </ligand>
</feature>
<feature type="site" description="Important for determining product chain length">
    <location>
        <position position="107"/>
    </location>
</feature>
<feature type="mutagenesis site" description="No effect. Monomer; when associated with G-8." evidence="6">
    <original>E</original>
    <variation>G</variation>
    <location>
        <position position="7"/>
    </location>
</feature>
<feature type="mutagenesis site" description="Monomer and homodimer. Monomer; when associated with G-7." evidence="6">
    <original>L</original>
    <variation>G</variation>
    <location>
        <position position="8"/>
    </location>
</feature>
<feature type="mutagenesis site" description="Mostly monomer. Exclusively monomer; when associated with G-8. Reduces enzyme activity 1000-fold." evidence="6">
    <original>I</original>
    <variation>G</variation>
    <location>
        <position position="9"/>
    </location>
</feature>
<feature type="mutagenesis site" description="Reduced affinity for isopentenyl diphosphate (IPP).">
    <original>Y</original>
    <variation>A</variation>
    <location>
        <position position="107"/>
    </location>
</feature>
<feature type="mutagenesis site" description="Reduced affinity for isopentenyl diphosphate (IPP).">
    <original>F</original>
    <variation>A</variation>
    <location>
        <position position="108"/>
    </location>
</feature>
<feature type="mutagenesis site" description="Reduced affinity for isopentenyl diphosphate (IPP).">
    <original>H</original>
    <variation>A</variation>
    <location>
        <position position="139"/>
    </location>
</feature>
<feature type="helix" evidence="12">
    <location>
        <begin position="1"/>
        <end position="9"/>
    </location>
</feature>
<feature type="helix" evidence="12">
    <location>
        <begin position="17"/>
        <end position="31"/>
    </location>
</feature>
<feature type="strand" evidence="13">
    <location>
        <begin position="32"/>
        <end position="34"/>
    </location>
</feature>
<feature type="helix" evidence="12">
    <location>
        <begin position="38"/>
        <end position="50"/>
    </location>
</feature>
<feature type="helix" evidence="12">
    <location>
        <begin position="54"/>
        <end position="78"/>
    </location>
</feature>
<feature type="strand" evidence="12">
    <location>
        <begin position="82"/>
        <end position="84"/>
    </location>
</feature>
<feature type="helix" evidence="12">
    <location>
        <begin position="90"/>
        <end position="93"/>
    </location>
</feature>
<feature type="helix" evidence="12">
    <location>
        <begin position="96"/>
        <end position="113"/>
    </location>
</feature>
<feature type="helix" evidence="12">
    <location>
        <begin position="114"/>
        <end position="117"/>
    </location>
</feature>
<feature type="helix" evidence="12">
    <location>
        <begin position="121"/>
        <end position="150"/>
    </location>
</feature>
<feature type="turn" evidence="14">
    <location>
        <begin position="151"/>
        <end position="153"/>
    </location>
</feature>
<feature type="helix" evidence="12">
    <location>
        <begin position="159"/>
        <end position="169"/>
    </location>
</feature>
<feature type="helix" evidence="12">
    <location>
        <begin position="171"/>
        <end position="184"/>
    </location>
</feature>
<feature type="helix" evidence="12">
    <location>
        <begin position="195"/>
        <end position="215"/>
    </location>
</feature>
<feature type="turn" evidence="11">
    <location>
        <begin position="221"/>
        <end position="223"/>
    </location>
</feature>
<feature type="helix" evidence="12">
    <location>
        <begin position="227"/>
        <end position="230"/>
    </location>
</feature>
<feature type="helix" evidence="12">
    <location>
        <begin position="236"/>
        <end position="247"/>
    </location>
</feature>
<feature type="helix" evidence="12">
    <location>
        <begin position="251"/>
        <end position="263"/>
    </location>
</feature>
<feature type="helix" evidence="12">
    <location>
        <begin position="268"/>
        <end position="280"/>
    </location>
</feature>
<feature type="helix" evidence="12">
    <location>
        <begin position="284"/>
        <end position="300"/>
    </location>
</feature>
<feature type="helix" evidence="14">
    <location>
        <begin position="325"/>
        <end position="330"/>
    </location>
</feature>
<feature type="turn" evidence="14">
    <location>
        <begin position="331"/>
        <end position="333"/>
    </location>
</feature>
<protein>
    <recommendedName>
        <fullName evidence="8">Geranylgeranyl pyrophosphate synthase BTS1</fullName>
        <shortName>GGPP synthase</shortName>
        <shortName>GGPPSase</shortName>
        <ecNumber>2.5.1.-</ecNumber>
    </recommendedName>
    <alternativeName>
        <fullName>(2E,6E)-farnesyl diphosphate synthase</fullName>
    </alternativeName>
    <alternativeName>
        <fullName>BET2 suppressor protein 1</fullName>
    </alternativeName>
    <alternativeName>
        <fullName>Dimethylallyltranstransferase</fullName>
        <ecNumber>2.5.1.1</ecNumber>
    </alternativeName>
    <alternativeName>
        <fullName>Farnesyl diphosphate synthase</fullName>
    </alternativeName>
    <alternativeName>
        <fullName>Farnesyltranstransferase</fullName>
        <ecNumber>2.5.1.29</ecNumber>
    </alternativeName>
    <alternativeName>
        <fullName>Geranylgeranyl diphosphate synthase</fullName>
    </alternativeName>
    <alternativeName>
        <fullName>Geranyltranstransferase</fullName>
        <ecNumber>2.5.1.10</ecNumber>
    </alternativeName>
</protein>
<evidence type="ECO:0000250" key="1"/>
<evidence type="ECO:0000269" key="2">
    <source>
    </source>
</evidence>
<evidence type="ECO:0000269" key="3">
    <source>
    </source>
</evidence>
<evidence type="ECO:0000269" key="4">
    <source>
    </source>
</evidence>
<evidence type="ECO:0000269" key="5">
    <source>
    </source>
</evidence>
<evidence type="ECO:0000269" key="6">
    <source>
    </source>
</evidence>
<evidence type="ECO:0000269" key="7">
    <source>
    </source>
</evidence>
<evidence type="ECO:0000303" key="8">
    <source>
    </source>
</evidence>
<evidence type="ECO:0000305" key="9"/>
<evidence type="ECO:0000305" key="10">
    <source>
    </source>
</evidence>
<evidence type="ECO:0007829" key="11">
    <source>
        <dbReference type="PDB" id="2DH4"/>
    </source>
</evidence>
<evidence type="ECO:0007829" key="12">
    <source>
        <dbReference type="PDB" id="2E8V"/>
    </source>
</evidence>
<evidence type="ECO:0007829" key="13">
    <source>
        <dbReference type="PDB" id="2E8X"/>
    </source>
</evidence>
<evidence type="ECO:0007829" key="14">
    <source>
        <dbReference type="PDB" id="2Z4V"/>
    </source>
</evidence>
<sequence length="335" mass="38651">MEAKIDELINNDPVWSSQNESLISKPYNHILLKPGKNFRLNLIVQINRVMNLPKDQLAIVSQIVELLHNSSLLIDDIEDNAPLRRGQTTSHLIFGVPSTINTANYMYFRAMQLVSQLTTKEPLYHNLITIFNEELINLHRGQGLDIYWRDFLPEIIPTQEMYLNMVMNKTGGLFRLTLRLMEALSPSSHHGHSLVPFINLLGIIYQIRDDYLNLKDFQMSSEKGFAEDITEGKLSFPIVHALNFTKTKGQTEQHNEILRILLLRTSDKDIKLKLIQILEFDTNSLAYTKNFINQLVNMIKNDNENKYLPDLASHSDTATNLHDELLYIIDHLSEL</sequence>
<proteinExistence type="evidence at protein level"/>
<reference key="1">
    <citation type="journal article" date="1995" name="J. Biol. Chem.">
        <title>BTS1 encodes a geranylgeranyl diphosphate synthase in Saccharomyces cerevisiae.</title>
        <authorList>
            <person name="Jiang Y."/>
            <person name="Proteau P."/>
            <person name="Poulter D."/>
            <person name="Ferro-Novick S."/>
        </authorList>
    </citation>
    <scope>NUCLEOTIDE SEQUENCE [GENOMIC DNA]</scope>
    <scope>FUNCTION</scope>
    <scope>CATALYTIC ACTIVITY</scope>
</reference>
<reference key="2">
    <citation type="journal article" date="1997" name="Nature">
        <title>The nucleotide sequence of Saccharomyces cerevisiae chromosome XVI.</title>
        <authorList>
            <person name="Bussey H."/>
            <person name="Storms R.K."/>
            <person name="Ahmed A."/>
            <person name="Albermann K."/>
            <person name="Allen E."/>
            <person name="Ansorge W."/>
            <person name="Araujo R."/>
            <person name="Aparicio A."/>
            <person name="Barrell B.G."/>
            <person name="Badcock K."/>
            <person name="Benes V."/>
            <person name="Botstein D."/>
            <person name="Bowman S."/>
            <person name="Brueckner M."/>
            <person name="Carpenter J."/>
            <person name="Cherry J.M."/>
            <person name="Chung E."/>
            <person name="Churcher C.M."/>
            <person name="Coster F."/>
            <person name="Davis K."/>
            <person name="Davis R.W."/>
            <person name="Dietrich F.S."/>
            <person name="Delius H."/>
            <person name="DiPaolo T."/>
            <person name="Dubois E."/>
            <person name="Duesterhoeft A."/>
            <person name="Duncan M."/>
            <person name="Floeth M."/>
            <person name="Fortin N."/>
            <person name="Friesen J.D."/>
            <person name="Fritz C."/>
            <person name="Goffeau A."/>
            <person name="Hall J."/>
            <person name="Hebling U."/>
            <person name="Heumann K."/>
            <person name="Hilbert H."/>
            <person name="Hillier L.W."/>
            <person name="Hunicke-Smith S."/>
            <person name="Hyman R.W."/>
            <person name="Johnston M."/>
            <person name="Kalman S."/>
            <person name="Kleine K."/>
            <person name="Komp C."/>
            <person name="Kurdi O."/>
            <person name="Lashkari D."/>
            <person name="Lew H."/>
            <person name="Lin A."/>
            <person name="Lin D."/>
            <person name="Louis E.J."/>
            <person name="Marathe R."/>
            <person name="Messenguy F."/>
            <person name="Mewes H.-W."/>
            <person name="Mirtipati S."/>
            <person name="Moestl D."/>
            <person name="Mueller-Auer S."/>
            <person name="Namath A."/>
            <person name="Nentwich U."/>
            <person name="Oefner P."/>
            <person name="Pearson D."/>
            <person name="Petel F.X."/>
            <person name="Pohl T.M."/>
            <person name="Purnelle B."/>
            <person name="Rajandream M.A."/>
            <person name="Rechmann S."/>
            <person name="Rieger M."/>
            <person name="Riles L."/>
            <person name="Roberts D."/>
            <person name="Schaefer M."/>
            <person name="Scharfe M."/>
            <person name="Scherens B."/>
            <person name="Schramm S."/>
            <person name="Schroeder M."/>
            <person name="Sdicu A.-M."/>
            <person name="Tettelin H."/>
            <person name="Urrestarazu L.A."/>
            <person name="Ushinsky S."/>
            <person name="Vierendeels F."/>
            <person name="Vissers S."/>
            <person name="Voss H."/>
            <person name="Walsh S.V."/>
            <person name="Wambutt R."/>
            <person name="Wang Y."/>
            <person name="Wedler E."/>
            <person name="Wedler H."/>
            <person name="Winnett E."/>
            <person name="Zhong W.-W."/>
            <person name="Zollner A."/>
            <person name="Vo D.H."/>
            <person name="Hani J."/>
        </authorList>
    </citation>
    <scope>NUCLEOTIDE SEQUENCE [LARGE SCALE GENOMIC DNA]</scope>
    <source>
        <strain>ATCC 204508 / S288c</strain>
    </source>
</reference>
<reference key="3">
    <citation type="journal article" date="2014" name="G3 (Bethesda)">
        <title>The reference genome sequence of Saccharomyces cerevisiae: Then and now.</title>
        <authorList>
            <person name="Engel S.R."/>
            <person name="Dietrich F.S."/>
            <person name="Fisk D.G."/>
            <person name="Binkley G."/>
            <person name="Balakrishnan R."/>
            <person name="Costanzo M.C."/>
            <person name="Dwight S.S."/>
            <person name="Hitz B.C."/>
            <person name="Karra K."/>
            <person name="Nash R.S."/>
            <person name="Weng S."/>
            <person name="Wong E.D."/>
            <person name="Lloyd P."/>
            <person name="Skrzypek M.S."/>
            <person name="Miyasato S.R."/>
            <person name="Simison M."/>
            <person name="Cherry J.M."/>
        </authorList>
    </citation>
    <scope>GENOME REANNOTATION</scope>
    <source>
        <strain>ATCC 204508 / S288c</strain>
    </source>
</reference>
<reference key="4">
    <citation type="journal article" date="2007" name="Genome Res.">
        <title>Approaching a complete repository of sequence-verified protein-encoding clones for Saccharomyces cerevisiae.</title>
        <authorList>
            <person name="Hu Y."/>
            <person name="Rolfs A."/>
            <person name="Bhullar B."/>
            <person name="Murthy T.V.S."/>
            <person name="Zhu C."/>
            <person name="Berger M.F."/>
            <person name="Camargo A.A."/>
            <person name="Kelley F."/>
            <person name="McCarron S."/>
            <person name="Jepson D."/>
            <person name="Richardson A."/>
            <person name="Raphael J."/>
            <person name="Moreira D."/>
            <person name="Taycher E."/>
            <person name="Zuo D."/>
            <person name="Mohr S."/>
            <person name="Kane M.F."/>
            <person name="Williamson J."/>
            <person name="Simpson A.J.G."/>
            <person name="Bulyk M.L."/>
            <person name="Harlow E."/>
            <person name="Marsischky G."/>
            <person name="Kolodner R.D."/>
            <person name="LaBaer J."/>
        </authorList>
    </citation>
    <scope>NUCLEOTIDE SEQUENCE [GENOMIC DNA]</scope>
    <source>
        <strain>ATCC 204508 / S288c</strain>
    </source>
</reference>
<reference key="5">
    <citation type="journal article" date="2003" name="Nature">
        <title>Global analysis of protein expression in yeast.</title>
        <authorList>
            <person name="Ghaemmaghami S."/>
            <person name="Huh W.-K."/>
            <person name="Bower K."/>
            <person name="Howson R.W."/>
            <person name="Belle A."/>
            <person name="Dephoure N."/>
            <person name="O'Shea E.K."/>
            <person name="Weissman J.S."/>
        </authorList>
    </citation>
    <scope>LEVEL OF PROTEIN EXPRESSION [LARGE SCALE ANALYSIS]</scope>
</reference>
<reference key="6">
    <citation type="journal article" date="2004" name="Traffic">
        <title>Bph1p, the Saccharomyces cerevisiae homologue of CHS1/beige, functions in cell wall formation and protein sorting.</title>
        <authorList>
            <person name="Shiflett S.L."/>
            <person name="Vaughn M.B."/>
            <person name="Huynh D."/>
            <person name="Kaplan J."/>
            <person name="McVey Ward D."/>
        </authorList>
    </citation>
    <scope>FUNCTION</scope>
</reference>
<reference key="7">
    <citation type="journal article" date="2009" name="J. Am. Chem. Soc.">
        <title>Combined experimental and theoretical study of long-range interactions modulating dimerization and activity of yeast geranylgeranyl diphosphate synthase.</title>
        <authorList>
            <person name="Lo C.-H."/>
            <person name="Chang Y.-H."/>
            <person name="Wright J.D."/>
            <person name="Chen S.-H."/>
            <person name="Kan D."/>
            <person name="Lim C."/>
            <person name="Liang P.-H."/>
        </authorList>
    </citation>
    <scope>SUBUNIT</scope>
    <scope>MUTAGENESIS OF GLU-7; LEU-8 AND ILE-9</scope>
</reference>
<reference key="8">
    <citation type="journal article" date="2006" name="J. Biol. Chem.">
        <title>Crystal structure of type-III geranylgeranyl pyrophosphate synthase from Saccharomyces cerevisiae and the mechanism of product chain length determination.</title>
        <authorList>
            <person name="Chang T.-H."/>
            <person name="Guo R.-T."/>
            <person name="Ko T.-P."/>
            <person name="Wang A.H.-J."/>
            <person name="Liang P.-H."/>
        </authorList>
    </citation>
    <scope>X-RAY CRYSTALLOGRAPHY (1.98 ANGSTROMS) IN COMPLEX WITH MAGNESIUM IONS</scope>
    <scope>SUBUNIT</scope>
</reference>
<reference key="9">
    <citation type="journal article" date="2007" name="Proc. Natl. Acad. Sci. U.S.A.">
        <title>Bisphosphonates target multiple sites in both cis- and trans-prenyltransferases.</title>
        <authorList>
            <person name="Guo R.-T."/>
            <person name="Cao R."/>
            <person name="Liang P.-H."/>
            <person name="Ko T.-P."/>
            <person name="Chang T.-H."/>
            <person name="Hudock M.P."/>
            <person name="Jeng W.-Y."/>
            <person name="Chen C.K.-M."/>
            <person name="Zhang Y."/>
            <person name="Song Y."/>
            <person name="Kuo C.-J."/>
            <person name="Yin F."/>
            <person name="Oldfield E."/>
            <person name="Wang A.H.-J."/>
        </authorList>
    </citation>
    <scope>X-RAY CRYSTALLOGRAPHY (1.8 ANGSTROMS) IN COMPLEXES WITH ISOPENTENYL DIPHOSPHATE; FARNESYL DIPHOSPHATE AND MAGNESIUM</scope>
    <scope>COFACTOR</scope>
    <scope>SUBUNIT</scope>
</reference>
<accession>Q12051</accession>
<accession>D6W3U6</accession>
<gene>
    <name type="primary">BTS1</name>
    <name type="ordered locus">YPL069C</name>
</gene>
<dbReference type="EC" id="2.5.1.-"/>
<dbReference type="EC" id="2.5.1.1"/>
<dbReference type="EC" id="2.5.1.29"/>
<dbReference type="EC" id="2.5.1.10"/>
<dbReference type="EMBL" id="U39205">
    <property type="protein sequence ID" value="AAB68296.1"/>
    <property type="molecule type" value="Genomic_DNA"/>
</dbReference>
<dbReference type="EMBL" id="U31632">
    <property type="protein sequence ID" value="AAA83262.1"/>
    <property type="molecule type" value="Genomic_DNA"/>
</dbReference>
<dbReference type="EMBL" id="AY692852">
    <property type="protein sequence ID" value="AAT92871.1"/>
    <property type="molecule type" value="Genomic_DNA"/>
</dbReference>
<dbReference type="EMBL" id="BK006949">
    <property type="protein sequence ID" value="DAA11362.1"/>
    <property type="molecule type" value="Genomic_DNA"/>
</dbReference>
<dbReference type="PIR" id="S60921">
    <property type="entry name" value="S60921"/>
</dbReference>
<dbReference type="RefSeq" id="NP_015256.1">
    <property type="nucleotide sequence ID" value="NM_001183883.1"/>
</dbReference>
<dbReference type="PDB" id="2DH4">
    <property type="method" value="X-ray"/>
    <property type="resolution" value="1.98 A"/>
    <property type="chains" value="A/B=1-335"/>
</dbReference>
<dbReference type="PDB" id="2E8T">
    <property type="method" value="X-ray"/>
    <property type="resolution" value="2.13 A"/>
    <property type="chains" value="A/B=1-335"/>
</dbReference>
<dbReference type="PDB" id="2E8U">
    <property type="method" value="X-ray"/>
    <property type="resolution" value="2.08 A"/>
    <property type="chains" value="A/B=1-335"/>
</dbReference>
<dbReference type="PDB" id="2E8V">
    <property type="method" value="X-ray"/>
    <property type="resolution" value="1.80 A"/>
    <property type="chains" value="A/B=1-335"/>
</dbReference>
<dbReference type="PDB" id="2E8W">
    <property type="method" value="X-ray"/>
    <property type="resolution" value="2.35 A"/>
    <property type="chains" value="A/B=1-335"/>
</dbReference>
<dbReference type="PDB" id="2E8X">
    <property type="method" value="X-ray"/>
    <property type="resolution" value="2.04 A"/>
    <property type="chains" value="A/B=1-335"/>
</dbReference>
<dbReference type="PDB" id="2E90">
    <property type="method" value="X-ray"/>
    <property type="resolution" value="2.55 A"/>
    <property type="chains" value="A/B=1-335"/>
</dbReference>
<dbReference type="PDB" id="2E91">
    <property type="method" value="X-ray"/>
    <property type="resolution" value="2.14 A"/>
    <property type="chains" value="A/B=1-335"/>
</dbReference>
<dbReference type="PDB" id="2E92">
    <property type="method" value="X-ray"/>
    <property type="resolution" value="2.31 A"/>
    <property type="chains" value="A/B=1-335"/>
</dbReference>
<dbReference type="PDB" id="2E93">
    <property type="method" value="X-ray"/>
    <property type="resolution" value="2.12 A"/>
    <property type="chains" value="A/B=1-335"/>
</dbReference>
<dbReference type="PDB" id="2E94">
    <property type="method" value="X-ray"/>
    <property type="resolution" value="2.18 A"/>
    <property type="chains" value="A/B=1-335"/>
</dbReference>
<dbReference type="PDB" id="2E95">
    <property type="method" value="X-ray"/>
    <property type="resolution" value="2.20 A"/>
    <property type="chains" value="A/B=1-335"/>
</dbReference>
<dbReference type="PDB" id="2Z4V">
    <property type="method" value="X-ray"/>
    <property type="resolution" value="1.86 A"/>
    <property type="chains" value="A/B=1-335"/>
</dbReference>
<dbReference type="PDB" id="2Z4W">
    <property type="method" value="X-ray"/>
    <property type="resolution" value="2.45 A"/>
    <property type="chains" value="A/B=1-335"/>
</dbReference>
<dbReference type="PDB" id="2Z4X">
    <property type="method" value="X-ray"/>
    <property type="resolution" value="1.90 A"/>
    <property type="chains" value="A/B=1-335"/>
</dbReference>
<dbReference type="PDB" id="2Z4Y">
    <property type="method" value="X-ray"/>
    <property type="resolution" value="2.10 A"/>
    <property type="chains" value="A/B=1-335"/>
</dbReference>
<dbReference type="PDB" id="2Z4Z">
    <property type="method" value="X-ray"/>
    <property type="resolution" value="2.09 A"/>
    <property type="chains" value="A/B=1-335"/>
</dbReference>
<dbReference type="PDB" id="2Z50">
    <property type="method" value="X-ray"/>
    <property type="resolution" value="2.01 A"/>
    <property type="chains" value="A/B=1-335"/>
</dbReference>
<dbReference type="PDB" id="2Z52">
    <property type="method" value="X-ray"/>
    <property type="resolution" value="2.13 A"/>
    <property type="chains" value="A/B=1-335"/>
</dbReference>
<dbReference type="PDB" id="2Z78">
    <property type="method" value="X-ray"/>
    <property type="resolution" value="2.10 A"/>
    <property type="chains" value="A/B=1-335"/>
</dbReference>
<dbReference type="PDB" id="2Z7H">
    <property type="method" value="X-ray"/>
    <property type="resolution" value="2.08 A"/>
    <property type="chains" value="A/B=1-335"/>
</dbReference>
<dbReference type="PDB" id="2Z7I">
    <property type="method" value="X-ray"/>
    <property type="resolution" value="2.10 A"/>
    <property type="chains" value="A/B=1-335"/>
</dbReference>
<dbReference type="PDB" id="2ZEU">
    <property type="method" value="X-ray"/>
    <property type="resolution" value="2.00 A"/>
    <property type="chains" value="A/B=1-335"/>
</dbReference>
<dbReference type="PDB" id="2ZEV">
    <property type="method" value="X-ray"/>
    <property type="resolution" value="2.23 A"/>
    <property type="chains" value="A/B=1-335"/>
</dbReference>
<dbReference type="PDBsum" id="2DH4"/>
<dbReference type="PDBsum" id="2E8T"/>
<dbReference type="PDBsum" id="2E8U"/>
<dbReference type="PDBsum" id="2E8V"/>
<dbReference type="PDBsum" id="2E8W"/>
<dbReference type="PDBsum" id="2E8X"/>
<dbReference type="PDBsum" id="2E90"/>
<dbReference type="PDBsum" id="2E91"/>
<dbReference type="PDBsum" id="2E92"/>
<dbReference type="PDBsum" id="2E93"/>
<dbReference type="PDBsum" id="2E94"/>
<dbReference type="PDBsum" id="2E95"/>
<dbReference type="PDBsum" id="2Z4V"/>
<dbReference type="PDBsum" id="2Z4W"/>
<dbReference type="PDBsum" id="2Z4X"/>
<dbReference type="PDBsum" id="2Z4Y"/>
<dbReference type="PDBsum" id="2Z4Z"/>
<dbReference type="PDBsum" id="2Z50"/>
<dbReference type="PDBsum" id="2Z52"/>
<dbReference type="PDBsum" id="2Z78"/>
<dbReference type="PDBsum" id="2Z7H"/>
<dbReference type="PDBsum" id="2Z7I"/>
<dbReference type="PDBsum" id="2ZEU"/>
<dbReference type="PDBsum" id="2ZEV"/>
<dbReference type="SMR" id="Q12051"/>
<dbReference type="BioGRID" id="36110">
    <property type="interactions" value="1035"/>
</dbReference>
<dbReference type="DIP" id="DIP-8889N"/>
<dbReference type="FunCoup" id="Q12051">
    <property type="interactions" value="534"/>
</dbReference>
<dbReference type="IntAct" id="Q12051">
    <property type="interactions" value="7"/>
</dbReference>
<dbReference type="STRING" id="4932.YPL069C"/>
<dbReference type="BindingDB" id="Q12051"/>
<dbReference type="ChEMBL" id="CHEMBL1075251"/>
<dbReference type="DrugCentral" id="Q12051"/>
<dbReference type="GlyGen" id="Q12051">
    <property type="glycosylation" value="2 sites, 1 O-linked glycan (2 sites)"/>
</dbReference>
<dbReference type="iPTMnet" id="Q12051"/>
<dbReference type="PaxDb" id="4932-YPL069C"/>
<dbReference type="PeptideAtlas" id="Q12051"/>
<dbReference type="EnsemblFungi" id="YPL069C_mRNA">
    <property type="protein sequence ID" value="YPL069C"/>
    <property type="gene ID" value="YPL069C"/>
</dbReference>
<dbReference type="GeneID" id="856036"/>
<dbReference type="KEGG" id="sce:YPL069C"/>
<dbReference type="AGR" id="SGD:S000005990"/>
<dbReference type="SGD" id="S000005990">
    <property type="gene designation" value="BTS1"/>
</dbReference>
<dbReference type="VEuPathDB" id="FungiDB:YPL069C"/>
<dbReference type="eggNOG" id="KOG0777">
    <property type="taxonomic scope" value="Eukaryota"/>
</dbReference>
<dbReference type="GeneTree" id="ENSGT00940000153498"/>
<dbReference type="HOGENOM" id="CLU_014015_6_0_1"/>
<dbReference type="InParanoid" id="Q12051"/>
<dbReference type="OMA" id="ANFAYFW"/>
<dbReference type="OrthoDB" id="6921389at2759"/>
<dbReference type="BioCyc" id="MetaCyc:YPL069C-MONOMER"/>
<dbReference type="BioCyc" id="YEAST:YPL069C-MONOMER"/>
<dbReference type="BRENDA" id="2.5.1.29">
    <property type="organism ID" value="984"/>
</dbReference>
<dbReference type="Reactome" id="R-SCE-191273">
    <property type="pathway name" value="Cholesterol biosynthesis"/>
</dbReference>
<dbReference type="SABIO-RK" id="Q12051"/>
<dbReference type="UniPathway" id="UPA00259">
    <property type="reaction ID" value="UER00368"/>
</dbReference>
<dbReference type="UniPathway" id="UPA00260">
    <property type="reaction ID" value="UER00369"/>
</dbReference>
<dbReference type="UniPathway" id="UPA00389">
    <property type="reaction ID" value="UER00564"/>
</dbReference>
<dbReference type="BioGRID-ORCS" id="856036">
    <property type="hits" value="0 hits in 10 CRISPR screens"/>
</dbReference>
<dbReference type="EvolutionaryTrace" id="Q12051"/>
<dbReference type="PRO" id="PR:Q12051"/>
<dbReference type="Proteomes" id="UP000002311">
    <property type="component" value="Chromosome XVI"/>
</dbReference>
<dbReference type="RNAct" id="Q12051">
    <property type="molecule type" value="protein"/>
</dbReference>
<dbReference type="GO" id="GO:0005739">
    <property type="term" value="C:mitochondrion"/>
    <property type="evidence" value="ECO:0007005"/>
    <property type="project" value="SGD"/>
</dbReference>
<dbReference type="GO" id="GO:0004337">
    <property type="term" value="F:(2E,6E)-farnesyl diphosphate synthase activity"/>
    <property type="evidence" value="ECO:0007669"/>
    <property type="project" value="UniProtKB-EC"/>
</dbReference>
<dbReference type="GO" id="GO:0004161">
    <property type="term" value="F:dimethylallyltranstransferase activity"/>
    <property type="evidence" value="ECO:0007669"/>
    <property type="project" value="UniProtKB-EC"/>
</dbReference>
<dbReference type="GO" id="GO:0004311">
    <property type="term" value="F:geranylgeranyl diphosphate synthase activity"/>
    <property type="evidence" value="ECO:0000314"/>
    <property type="project" value="CACAO"/>
</dbReference>
<dbReference type="GO" id="GO:0046872">
    <property type="term" value="F:metal ion binding"/>
    <property type="evidence" value="ECO:0007669"/>
    <property type="project" value="UniProtKB-KW"/>
</dbReference>
<dbReference type="GO" id="GO:0045337">
    <property type="term" value="P:farnesyl diphosphate biosynthetic process"/>
    <property type="evidence" value="ECO:0007669"/>
    <property type="project" value="UniProtKB-UniPathway"/>
</dbReference>
<dbReference type="GO" id="GO:0033384">
    <property type="term" value="P:geranyl diphosphate biosynthetic process"/>
    <property type="evidence" value="ECO:0007669"/>
    <property type="project" value="UniProtKB-UniPathway"/>
</dbReference>
<dbReference type="GO" id="GO:0033386">
    <property type="term" value="P:geranylgeranyl diphosphate biosynthetic process"/>
    <property type="evidence" value="ECO:0000314"/>
    <property type="project" value="CACAO"/>
</dbReference>
<dbReference type="GO" id="GO:0008299">
    <property type="term" value="P:isoprenoid biosynthetic process"/>
    <property type="evidence" value="ECO:0000318"/>
    <property type="project" value="GO_Central"/>
</dbReference>
<dbReference type="GO" id="GO:0015031">
    <property type="term" value="P:protein transport"/>
    <property type="evidence" value="ECO:0007669"/>
    <property type="project" value="UniProtKB-KW"/>
</dbReference>
<dbReference type="GO" id="GO:0016114">
    <property type="term" value="P:terpenoid biosynthetic process"/>
    <property type="evidence" value="ECO:0000314"/>
    <property type="project" value="SGD"/>
</dbReference>
<dbReference type="CDD" id="cd00685">
    <property type="entry name" value="Trans_IPPS_HT"/>
    <property type="match status" value="1"/>
</dbReference>
<dbReference type="FunFam" id="1.10.600.10:FF:000030">
    <property type="entry name" value="Geranylgeranyl pyrophosphate synthase"/>
    <property type="match status" value="1"/>
</dbReference>
<dbReference type="Gene3D" id="1.10.600.10">
    <property type="entry name" value="Farnesyl Diphosphate Synthase"/>
    <property type="match status" value="1"/>
</dbReference>
<dbReference type="InterPro" id="IPR008949">
    <property type="entry name" value="Isoprenoid_synthase_dom_sf"/>
</dbReference>
<dbReference type="InterPro" id="IPR000092">
    <property type="entry name" value="Polyprenyl_synt"/>
</dbReference>
<dbReference type="InterPro" id="IPR033749">
    <property type="entry name" value="Polyprenyl_synt_CS"/>
</dbReference>
<dbReference type="PANTHER" id="PTHR12001">
    <property type="entry name" value="GERANYLGERANYL PYROPHOSPHATE SYNTHASE"/>
    <property type="match status" value="1"/>
</dbReference>
<dbReference type="PANTHER" id="PTHR12001:SF44">
    <property type="entry name" value="GERANYLGERANYL PYROPHOSPHATE SYNTHASE"/>
    <property type="match status" value="1"/>
</dbReference>
<dbReference type="Pfam" id="PF00348">
    <property type="entry name" value="polyprenyl_synt"/>
    <property type="match status" value="1"/>
</dbReference>
<dbReference type="SFLD" id="SFLDS00005">
    <property type="entry name" value="Isoprenoid_Synthase_Type_I"/>
    <property type="match status" value="1"/>
</dbReference>
<dbReference type="SFLD" id="SFLDG01017">
    <property type="entry name" value="Polyprenyl_Transferase_Like"/>
    <property type="match status" value="1"/>
</dbReference>
<dbReference type="SUPFAM" id="SSF48576">
    <property type="entry name" value="Terpenoid synthases"/>
    <property type="match status" value="1"/>
</dbReference>
<dbReference type="PROSITE" id="PS00723">
    <property type="entry name" value="POLYPRENYL_SYNTHASE_1"/>
    <property type="match status" value="1"/>
</dbReference>
<dbReference type="PROSITE" id="PS00444">
    <property type="entry name" value="POLYPRENYL_SYNTHASE_2"/>
    <property type="match status" value="1"/>
</dbReference>
<organism>
    <name type="scientific">Saccharomyces cerevisiae (strain ATCC 204508 / S288c)</name>
    <name type="common">Baker's yeast</name>
    <dbReference type="NCBI Taxonomy" id="559292"/>
    <lineage>
        <taxon>Eukaryota</taxon>
        <taxon>Fungi</taxon>
        <taxon>Dikarya</taxon>
        <taxon>Ascomycota</taxon>
        <taxon>Saccharomycotina</taxon>
        <taxon>Saccharomycetes</taxon>
        <taxon>Saccharomycetales</taxon>
        <taxon>Saccharomycetaceae</taxon>
        <taxon>Saccharomyces</taxon>
    </lineage>
</organism>
<name>GGPPS_YEAST</name>
<keyword id="KW-0002">3D-structure</keyword>
<keyword id="KW-0125">Carotenoid biosynthesis</keyword>
<keyword id="KW-0963">Cytoplasm</keyword>
<keyword id="KW-0414">Isoprene biosynthesis</keyword>
<keyword id="KW-0460">Magnesium</keyword>
<keyword id="KW-0479">Metal-binding</keyword>
<keyword id="KW-0653">Protein transport</keyword>
<keyword id="KW-1185">Reference proteome</keyword>
<keyword id="KW-0808">Transferase</keyword>
<keyword id="KW-0813">Transport</keyword>